<proteinExistence type="evidence at protein level"/>
<protein>
    <recommendedName>
        <fullName evidence="5">tRNA 4-demethylwyosine(37)-methyltransferase Taw21</fullName>
        <ecNumber evidence="3">2.1.1.-</ecNumber>
    </recommendedName>
    <alternativeName>
        <fullName evidence="4">tRNA(Phe):imG2 methyltransferase</fullName>
    </alternativeName>
</protein>
<feature type="chain" id="PRO_0000439043" description="tRNA 4-demethylwyosine(37)-methyltransferase Taw21">
    <location>
        <begin position="1"/>
        <end position="262"/>
    </location>
</feature>
<feature type="binding site" evidence="2">
    <location>
        <position position="108"/>
    </location>
    <ligand>
        <name>S-adenosyl-L-methionine</name>
        <dbReference type="ChEBI" id="CHEBI:59789"/>
    </ligand>
</feature>
<feature type="binding site" evidence="1">
    <location>
        <position position="125"/>
    </location>
    <ligand>
        <name>S-adenosyl-L-methionine</name>
        <dbReference type="ChEBI" id="CHEBI:59789"/>
    </ligand>
</feature>
<feature type="binding site" evidence="2">
    <location>
        <begin position="148"/>
        <end position="149"/>
    </location>
    <ligand>
        <name>S-adenosyl-L-methionine</name>
        <dbReference type="ChEBI" id="CHEBI:59789"/>
    </ligand>
</feature>
<feature type="binding site" evidence="2">
    <location>
        <begin position="175"/>
        <end position="176"/>
    </location>
    <ligand>
        <name>S-adenosyl-L-methionine</name>
        <dbReference type="ChEBI" id="CHEBI:59789"/>
    </ligand>
</feature>
<gene>
    <name evidence="4" type="primary">taw21</name>
    <name evidence="6" type="ordered locus">SSO2439</name>
</gene>
<organism>
    <name type="scientific">Saccharolobus solfataricus (strain ATCC 35092 / DSM 1617 / JCM 11322 / P2)</name>
    <name type="common">Sulfolobus solfataricus</name>
    <dbReference type="NCBI Taxonomy" id="273057"/>
    <lineage>
        <taxon>Archaea</taxon>
        <taxon>Thermoproteota</taxon>
        <taxon>Thermoprotei</taxon>
        <taxon>Sulfolobales</taxon>
        <taxon>Sulfolobaceae</taxon>
        <taxon>Saccharolobus</taxon>
    </lineage>
</organism>
<sequence length="262" mass="30468">MKTLIKRLQDQQDIWKRIEIVGDIVIIGVPFNKKPEDLVEIANEILSTFPYVKSVWGRHRDVNGTYRLSTYVHLAGEKRSETVYKEHKCKYFLDFTKVFFSEKLSYEHLRVATQVKRDEIIINMFSGFGPFSILSAVLGRPKIVYSIDLNPYAYYYMMVNVELNKAYEVLPIYGDAFKRIYELEDADRIIAPLPELADKAYEVALQKVKKGGIIHLYTEVETNKGEDPVRIAMNKYRGSYFGRIVRSVNPHKYHVVVDIKAN</sequence>
<dbReference type="EC" id="2.1.1.-" evidence="3"/>
<dbReference type="EMBL" id="AE006641">
    <property type="protein sequence ID" value="AAK42582.1"/>
    <property type="molecule type" value="Genomic_DNA"/>
</dbReference>
<dbReference type="PIR" id="G90415">
    <property type="entry name" value="G90415"/>
</dbReference>
<dbReference type="SMR" id="Q97W08"/>
<dbReference type="STRING" id="273057.SSO2439"/>
<dbReference type="PaxDb" id="273057-SSO2439"/>
<dbReference type="EnsemblBacteria" id="AAK42582">
    <property type="protein sequence ID" value="AAK42582"/>
    <property type="gene ID" value="SSO2439"/>
</dbReference>
<dbReference type="KEGG" id="sso:SSO2439"/>
<dbReference type="PATRIC" id="fig|273057.12.peg.2520"/>
<dbReference type="eggNOG" id="arCOG00033">
    <property type="taxonomic scope" value="Archaea"/>
</dbReference>
<dbReference type="HOGENOM" id="CLU_022610_0_0_2"/>
<dbReference type="InParanoid" id="Q97W08"/>
<dbReference type="PhylomeDB" id="Q97W08"/>
<dbReference type="BRENDA" id="2.1.1.282">
    <property type="organism ID" value="6163"/>
</dbReference>
<dbReference type="Proteomes" id="UP000001974">
    <property type="component" value="Chromosome"/>
</dbReference>
<dbReference type="GO" id="GO:0005737">
    <property type="term" value="C:cytoplasm"/>
    <property type="evidence" value="ECO:0000318"/>
    <property type="project" value="GO_Central"/>
</dbReference>
<dbReference type="GO" id="GO:0008175">
    <property type="term" value="F:tRNA methyltransferase activity"/>
    <property type="evidence" value="ECO:0000318"/>
    <property type="project" value="GO_Central"/>
</dbReference>
<dbReference type="GO" id="GO:0002939">
    <property type="term" value="P:tRNA N1-guanine methylation"/>
    <property type="evidence" value="ECO:0000318"/>
    <property type="project" value="GO_Central"/>
</dbReference>
<dbReference type="CDD" id="cd02440">
    <property type="entry name" value="AdoMet_MTases"/>
    <property type="match status" value="1"/>
</dbReference>
<dbReference type="FunFam" id="3.40.50.150:FF:000865">
    <property type="entry name" value="Putative methyltransferase"/>
    <property type="match status" value="1"/>
</dbReference>
<dbReference type="Gene3D" id="3.30.300.110">
    <property type="entry name" value="Met-10+ protein-like domains"/>
    <property type="match status" value="1"/>
</dbReference>
<dbReference type="Gene3D" id="3.40.50.150">
    <property type="entry name" value="Vaccinia Virus protein VP39"/>
    <property type="match status" value="1"/>
</dbReference>
<dbReference type="InterPro" id="IPR030382">
    <property type="entry name" value="MeTrfase_TRM5/TYW2"/>
</dbReference>
<dbReference type="InterPro" id="IPR029063">
    <property type="entry name" value="SAM-dependent_MTases_sf"/>
</dbReference>
<dbReference type="InterPro" id="IPR056743">
    <property type="entry name" value="TRM5-TYW2-like_MTfase"/>
</dbReference>
<dbReference type="InterPro" id="IPR056744">
    <property type="entry name" value="TRM5/TYW2-like_N"/>
</dbReference>
<dbReference type="NCBIfam" id="NF047729">
    <property type="entry name" value="tRNAMtaseTaw21"/>
    <property type="match status" value="1"/>
</dbReference>
<dbReference type="PANTHER" id="PTHR23245:SF36">
    <property type="entry name" value="TRNA (GUANINE(37)-N1)-METHYLTRANSFERASE"/>
    <property type="match status" value="1"/>
</dbReference>
<dbReference type="PANTHER" id="PTHR23245">
    <property type="entry name" value="TRNA METHYLTRANSFERASE"/>
    <property type="match status" value="1"/>
</dbReference>
<dbReference type="Pfam" id="PF02475">
    <property type="entry name" value="TRM5-TYW2_MTfase"/>
    <property type="match status" value="1"/>
</dbReference>
<dbReference type="Pfam" id="PF25133">
    <property type="entry name" value="TYW2_N_2"/>
    <property type="match status" value="1"/>
</dbReference>
<dbReference type="SUPFAM" id="SSF53335">
    <property type="entry name" value="S-adenosyl-L-methionine-dependent methyltransferases"/>
    <property type="match status" value="1"/>
</dbReference>
<dbReference type="PROSITE" id="PS51684">
    <property type="entry name" value="SAM_MT_TRM5_TYW2"/>
    <property type="match status" value="1"/>
</dbReference>
<accession>Q97W08</accession>
<keyword id="KW-0963">Cytoplasm</keyword>
<keyword id="KW-0489">Methyltransferase</keyword>
<keyword id="KW-1185">Reference proteome</keyword>
<keyword id="KW-0949">S-adenosyl-L-methionine</keyword>
<keyword id="KW-0808">Transferase</keyword>
<keyword id="KW-0819">tRNA processing</keyword>
<evidence type="ECO:0000250" key="1">
    <source>
        <dbReference type="UniProtKB" id="Q9V2G1"/>
    </source>
</evidence>
<evidence type="ECO:0000255" key="2">
    <source>
        <dbReference type="PROSITE-ProRule" id="PRU01021"/>
    </source>
</evidence>
<evidence type="ECO:0000269" key="3">
    <source>
    </source>
</evidence>
<evidence type="ECO:0000303" key="4">
    <source>
    </source>
</evidence>
<evidence type="ECO:0000305" key="5"/>
<evidence type="ECO:0000312" key="6">
    <source>
        <dbReference type="EMBL" id="AAK42582.1"/>
    </source>
</evidence>
<reference key="1">
    <citation type="journal article" date="2001" name="Proc. Natl. Acad. Sci. U.S.A.">
        <title>The complete genome of the crenarchaeon Sulfolobus solfataricus P2.</title>
        <authorList>
            <person name="She Q."/>
            <person name="Singh R.K."/>
            <person name="Confalonieri F."/>
            <person name="Zivanovic Y."/>
            <person name="Allard G."/>
            <person name="Awayez M.J."/>
            <person name="Chan-Weiher C.C.-Y."/>
            <person name="Clausen I.G."/>
            <person name="Curtis B.A."/>
            <person name="De Moors A."/>
            <person name="Erauso G."/>
            <person name="Fletcher C."/>
            <person name="Gordon P.M.K."/>
            <person name="Heikamp-de Jong I."/>
            <person name="Jeffries A.C."/>
            <person name="Kozera C.J."/>
            <person name="Medina N."/>
            <person name="Peng X."/>
            <person name="Thi-Ngoc H.P."/>
            <person name="Redder P."/>
            <person name="Schenk M.E."/>
            <person name="Theriault C."/>
            <person name="Tolstrup N."/>
            <person name="Charlebois R.L."/>
            <person name="Doolittle W.F."/>
            <person name="Duguet M."/>
            <person name="Gaasterland T."/>
            <person name="Garrett R.A."/>
            <person name="Ragan M.A."/>
            <person name="Sensen C.W."/>
            <person name="Van der Oost J."/>
        </authorList>
    </citation>
    <scope>NUCLEOTIDE SEQUENCE [LARGE SCALE GENOMIC DNA]</scope>
    <source>
        <strain>ATCC 35092 / DSM 1617 / JCM 11322 / P2</strain>
    </source>
</reference>
<reference key="2">
    <citation type="journal article" date="2016" name="RNA">
        <title>Evolution of tRNAPhe:imG2 methyltransferases involved in the biosynthesis of wyosine derivatives in Archaea.</title>
        <authorList>
            <person name="Urbonavicius J."/>
            <person name="Rutkiene R."/>
            <person name="Lopato A."/>
            <person name="Tauraite D."/>
            <person name="Stankeviciute J."/>
            <person name="Aucynaite A."/>
            <person name="Kaliniene L."/>
            <person name="van Tilbeurgh H."/>
            <person name="Meskys R."/>
        </authorList>
    </citation>
    <scope>FUNCTION</scope>
    <scope>CATALYTIC ACTIVITY</scope>
    <source>
        <strain>ATCC 35092 / DSM 1617 / JCM 11322 / P2</strain>
    </source>
</reference>
<comment type="function">
    <text evidence="3">Catalyzes the C7-methylation of 4-demethylwyosine (imG-14) at position 37 in tRNA(Phe).</text>
</comment>
<comment type="catalytic activity">
    <reaction evidence="3">
        <text>4-demethylwyosine(37) in tRNA(Phe) + S-adenosyl-L-methionine = isowyosine(37) in tRNA(Phe) + S-adenosyl-L-homocysteine + H(+)</text>
        <dbReference type="Rhea" id="RHEA:53056"/>
        <dbReference type="Rhea" id="RHEA-COMP:10164"/>
        <dbReference type="Rhea" id="RHEA-COMP:13445"/>
        <dbReference type="ChEBI" id="CHEBI:15378"/>
        <dbReference type="ChEBI" id="CHEBI:57856"/>
        <dbReference type="ChEBI" id="CHEBI:59789"/>
        <dbReference type="ChEBI" id="CHEBI:64315"/>
        <dbReference type="ChEBI" id="CHEBI:136979"/>
    </reaction>
</comment>
<comment type="subcellular location">
    <subcellularLocation>
        <location evidence="5">Cytoplasm</location>
    </subcellularLocation>
</comment>
<comment type="similarity">
    <text evidence="2">Belongs to the class I-like SAM-binding methyltransferase superfamily. TRM5/TYW2 family.</text>
</comment>
<name>TAW21_SACS2</name>